<evidence type="ECO:0000255" key="1">
    <source>
        <dbReference type="HAMAP-Rule" id="MF_00318"/>
    </source>
</evidence>
<gene>
    <name evidence="1" type="primary">eno</name>
    <name type="ordered locus">Ajs_0997</name>
</gene>
<comment type="function">
    <text evidence="1">Catalyzes the reversible conversion of 2-phosphoglycerate (2-PG) into phosphoenolpyruvate (PEP). It is essential for the degradation of carbohydrates via glycolysis.</text>
</comment>
<comment type="catalytic activity">
    <reaction evidence="1">
        <text>(2R)-2-phosphoglycerate = phosphoenolpyruvate + H2O</text>
        <dbReference type="Rhea" id="RHEA:10164"/>
        <dbReference type="ChEBI" id="CHEBI:15377"/>
        <dbReference type="ChEBI" id="CHEBI:58289"/>
        <dbReference type="ChEBI" id="CHEBI:58702"/>
        <dbReference type="EC" id="4.2.1.11"/>
    </reaction>
</comment>
<comment type="cofactor">
    <cofactor evidence="1">
        <name>Mg(2+)</name>
        <dbReference type="ChEBI" id="CHEBI:18420"/>
    </cofactor>
    <text evidence="1">Binds a second Mg(2+) ion via substrate during catalysis.</text>
</comment>
<comment type="pathway">
    <text evidence="1">Carbohydrate degradation; glycolysis; pyruvate from D-glyceraldehyde 3-phosphate: step 4/5.</text>
</comment>
<comment type="subcellular location">
    <subcellularLocation>
        <location evidence="1">Cytoplasm</location>
    </subcellularLocation>
    <subcellularLocation>
        <location evidence="1">Secreted</location>
    </subcellularLocation>
    <subcellularLocation>
        <location evidence="1">Cell surface</location>
    </subcellularLocation>
    <text evidence="1">Fractions of enolase are present in both the cytoplasm and on the cell surface.</text>
</comment>
<comment type="similarity">
    <text evidence="1">Belongs to the enolase family.</text>
</comment>
<name>ENO_ACISJ</name>
<proteinExistence type="inferred from homology"/>
<protein>
    <recommendedName>
        <fullName evidence="1">Enolase</fullName>
        <ecNumber evidence="1">4.2.1.11</ecNumber>
    </recommendedName>
    <alternativeName>
        <fullName evidence="1">2-phospho-D-glycerate hydro-lyase</fullName>
    </alternativeName>
    <alternativeName>
        <fullName evidence="1">2-phosphoglycerate dehydratase</fullName>
    </alternativeName>
</protein>
<organism>
    <name type="scientific">Acidovorax sp. (strain JS42)</name>
    <dbReference type="NCBI Taxonomy" id="232721"/>
    <lineage>
        <taxon>Bacteria</taxon>
        <taxon>Pseudomonadati</taxon>
        <taxon>Pseudomonadota</taxon>
        <taxon>Betaproteobacteria</taxon>
        <taxon>Burkholderiales</taxon>
        <taxon>Comamonadaceae</taxon>
        <taxon>Acidovorax</taxon>
    </lineage>
</organism>
<reference key="1">
    <citation type="submission" date="2006-12" db="EMBL/GenBank/DDBJ databases">
        <title>Complete sequence of chromosome 1 of Acidovorax sp. JS42.</title>
        <authorList>
            <person name="Copeland A."/>
            <person name="Lucas S."/>
            <person name="Lapidus A."/>
            <person name="Barry K."/>
            <person name="Detter J.C."/>
            <person name="Glavina del Rio T."/>
            <person name="Dalin E."/>
            <person name="Tice H."/>
            <person name="Pitluck S."/>
            <person name="Chertkov O."/>
            <person name="Brettin T."/>
            <person name="Bruce D."/>
            <person name="Han C."/>
            <person name="Tapia R."/>
            <person name="Gilna P."/>
            <person name="Schmutz J."/>
            <person name="Larimer F."/>
            <person name="Land M."/>
            <person name="Hauser L."/>
            <person name="Kyrpides N."/>
            <person name="Kim E."/>
            <person name="Stahl D."/>
            <person name="Richardson P."/>
        </authorList>
    </citation>
    <scope>NUCLEOTIDE SEQUENCE [LARGE SCALE GENOMIC DNA]</scope>
    <source>
        <strain>JS42</strain>
    </source>
</reference>
<dbReference type="EC" id="4.2.1.11" evidence="1"/>
<dbReference type="EMBL" id="CP000539">
    <property type="protein sequence ID" value="ABM41236.1"/>
    <property type="molecule type" value="Genomic_DNA"/>
</dbReference>
<dbReference type="SMR" id="A1W4R1"/>
<dbReference type="STRING" id="232721.Ajs_0997"/>
<dbReference type="KEGG" id="ajs:Ajs_0997"/>
<dbReference type="eggNOG" id="COG0148">
    <property type="taxonomic scope" value="Bacteria"/>
</dbReference>
<dbReference type="HOGENOM" id="CLU_031223_2_1_4"/>
<dbReference type="UniPathway" id="UPA00109">
    <property type="reaction ID" value="UER00187"/>
</dbReference>
<dbReference type="Proteomes" id="UP000000645">
    <property type="component" value="Chromosome"/>
</dbReference>
<dbReference type="GO" id="GO:0009986">
    <property type="term" value="C:cell surface"/>
    <property type="evidence" value="ECO:0007669"/>
    <property type="project" value="UniProtKB-SubCell"/>
</dbReference>
<dbReference type="GO" id="GO:0005576">
    <property type="term" value="C:extracellular region"/>
    <property type="evidence" value="ECO:0007669"/>
    <property type="project" value="UniProtKB-SubCell"/>
</dbReference>
<dbReference type="GO" id="GO:0000015">
    <property type="term" value="C:phosphopyruvate hydratase complex"/>
    <property type="evidence" value="ECO:0007669"/>
    <property type="project" value="InterPro"/>
</dbReference>
<dbReference type="GO" id="GO:0000287">
    <property type="term" value="F:magnesium ion binding"/>
    <property type="evidence" value="ECO:0007669"/>
    <property type="project" value="UniProtKB-UniRule"/>
</dbReference>
<dbReference type="GO" id="GO:0004634">
    <property type="term" value="F:phosphopyruvate hydratase activity"/>
    <property type="evidence" value="ECO:0007669"/>
    <property type="project" value="UniProtKB-UniRule"/>
</dbReference>
<dbReference type="GO" id="GO:0006096">
    <property type="term" value="P:glycolytic process"/>
    <property type="evidence" value="ECO:0007669"/>
    <property type="project" value="UniProtKB-UniRule"/>
</dbReference>
<dbReference type="CDD" id="cd03313">
    <property type="entry name" value="enolase"/>
    <property type="match status" value="1"/>
</dbReference>
<dbReference type="FunFam" id="3.20.20.120:FF:000001">
    <property type="entry name" value="Enolase"/>
    <property type="match status" value="1"/>
</dbReference>
<dbReference type="FunFam" id="3.30.390.10:FF:000001">
    <property type="entry name" value="Enolase"/>
    <property type="match status" value="1"/>
</dbReference>
<dbReference type="Gene3D" id="3.20.20.120">
    <property type="entry name" value="Enolase-like C-terminal domain"/>
    <property type="match status" value="1"/>
</dbReference>
<dbReference type="Gene3D" id="3.30.390.10">
    <property type="entry name" value="Enolase-like, N-terminal domain"/>
    <property type="match status" value="1"/>
</dbReference>
<dbReference type="HAMAP" id="MF_00318">
    <property type="entry name" value="Enolase"/>
    <property type="match status" value="1"/>
</dbReference>
<dbReference type="InterPro" id="IPR000941">
    <property type="entry name" value="Enolase"/>
</dbReference>
<dbReference type="InterPro" id="IPR036849">
    <property type="entry name" value="Enolase-like_C_sf"/>
</dbReference>
<dbReference type="InterPro" id="IPR029017">
    <property type="entry name" value="Enolase-like_N"/>
</dbReference>
<dbReference type="InterPro" id="IPR020810">
    <property type="entry name" value="Enolase_C"/>
</dbReference>
<dbReference type="InterPro" id="IPR020809">
    <property type="entry name" value="Enolase_CS"/>
</dbReference>
<dbReference type="InterPro" id="IPR020811">
    <property type="entry name" value="Enolase_N"/>
</dbReference>
<dbReference type="NCBIfam" id="TIGR01060">
    <property type="entry name" value="eno"/>
    <property type="match status" value="1"/>
</dbReference>
<dbReference type="PANTHER" id="PTHR11902">
    <property type="entry name" value="ENOLASE"/>
    <property type="match status" value="1"/>
</dbReference>
<dbReference type="PANTHER" id="PTHR11902:SF1">
    <property type="entry name" value="ENOLASE"/>
    <property type="match status" value="1"/>
</dbReference>
<dbReference type="Pfam" id="PF00113">
    <property type="entry name" value="Enolase_C"/>
    <property type="match status" value="1"/>
</dbReference>
<dbReference type="Pfam" id="PF03952">
    <property type="entry name" value="Enolase_N"/>
    <property type="match status" value="1"/>
</dbReference>
<dbReference type="PIRSF" id="PIRSF001400">
    <property type="entry name" value="Enolase"/>
    <property type="match status" value="1"/>
</dbReference>
<dbReference type="PRINTS" id="PR00148">
    <property type="entry name" value="ENOLASE"/>
</dbReference>
<dbReference type="SFLD" id="SFLDF00002">
    <property type="entry name" value="enolase"/>
    <property type="match status" value="1"/>
</dbReference>
<dbReference type="SFLD" id="SFLDG00178">
    <property type="entry name" value="enolase"/>
    <property type="match status" value="1"/>
</dbReference>
<dbReference type="SMART" id="SM01192">
    <property type="entry name" value="Enolase_C"/>
    <property type="match status" value="1"/>
</dbReference>
<dbReference type="SMART" id="SM01193">
    <property type="entry name" value="Enolase_N"/>
    <property type="match status" value="1"/>
</dbReference>
<dbReference type="SUPFAM" id="SSF51604">
    <property type="entry name" value="Enolase C-terminal domain-like"/>
    <property type="match status" value="1"/>
</dbReference>
<dbReference type="SUPFAM" id="SSF54826">
    <property type="entry name" value="Enolase N-terminal domain-like"/>
    <property type="match status" value="1"/>
</dbReference>
<dbReference type="PROSITE" id="PS00164">
    <property type="entry name" value="ENOLASE"/>
    <property type="match status" value="1"/>
</dbReference>
<feature type="chain" id="PRO_0000280831" description="Enolase">
    <location>
        <begin position="1"/>
        <end position="428"/>
    </location>
</feature>
<feature type="active site" description="Proton donor" evidence="1">
    <location>
        <position position="205"/>
    </location>
</feature>
<feature type="active site" description="Proton acceptor" evidence="1">
    <location>
        <position position="338"/>
    </location>
</feature>
<feature type="binding site" evidence="1">
    <location>
        <position position="163"/>
    </location>
    <ligand>
        <name>(2R)-2-phosphoglycerate</name>
        <dbReference type="ChEBI" id="CHEBI:58289"/>
    </ligand>
</feature>
<feature type="binding site" evidence="1">
    <location>
        <position position="242"/>
    </location>
    <ligand>
        <name>Mg(2+)</name>
        <dbReference type="ChEBI" id="CHEBI:18420"/>
    </ligand>
</feature>
<feature type="binding site" evidence="1">
    <location>
        <position position="286"/>
    </location>
    <ligand>
        <name>Mg(2+)</name>
        <dbReference type="ChEBI" id="CHEBI:18420"/>
    </ligand>
</feature>
<feature type="binding site" evidence="1">
    <location>
        <position position="313"/>
    </location>
    <ligand>
        <name>Mg(2+)</name>
        <dbReference type="ChEBI" id="CHEBI:18420"/>
    </ligand>
</feature>
<feature type="binding site" evidence="1">
    <location>
        <position position="338"/>
    </location>
    <ligand>
        <name>(2R)-2-phosphoglycerate</name>
        <dbReference type="ChEBI" id="CHEBI:58289"/>
    </ligand>
</feature>
<feature type="binding site" evidence="1">
    <location>
        <position position="367"/>
    </location>
    <ligand>
        <name>(2R)-2-phosphoglycerate</name>
        <dbReference type="ChEBI" id="CHEBI:58289"/>
    </ligand>
</feature>
<feature type="binding site" evidence="1">
    <location>
        <position position="368"/>
    </location>
    <ligand>
        <name>(2R)-2-phosphoglycerate</name>
        <dbReference type="ChEBI" id="CHEBI:58289"/>
    </ligand>
</feature>
<feature type="binding site" evidence="1">
    <location>
        <position position="389"/>
    </location>
    <ligand>
        <name>(2R)-2-phosphoglycerate</name>
        <dbReference type="ChEBI" id="CHEBI:58289"/>
    </ligand>
</feature>
<accession>A1W4R1</accession>
<keyword id="KW-0963">Cytoplasm</keyword>
<keyword id="KW-0324">Glycolysis</keyword>
<keyword id="KW-0456">Lyase</keyword>
<keyword id="KW-0460">Magnesium</keyword>
<keyword id="KW-0479">Metal-binding</keyword>
<keyword id="KW-0964">Secreted</keyword>
<sequence>MSAIVDIVGREVLDSRGNPTVECDVLLESGVMGRAAVPSGASTGSREAIELRDGDKSRYLGKGVLKAVEHINTEISEAVLGLDASEQGFLDKTLIDLDGTDNKSRLGANAMLAVSMAVARAAAEESGLPLYRYLGGMGSVQLPVPMMNVINGGAHANNSLDLQEFMIIPVGAPSFREAVRWGAEVFHALKKIIHDKGMSTAVGDEGGFAPSVENHEAAIQLILQAIEAAGYTAGEQIALGLDCAASEFYKDGMYVLEGEGGLQLTAQQWTDMLASWCDKYPIISIEDGMHEGDWDGWKILTERLGHNVQLVGDDLFVTNTKILKEGIDKGIANSILIKINQIGTLTETFAAIEMAKRAGYTAVISHRSGETEDSTIADIAVGTNAGQIKTGSLSRSDRIAKYNQLLRIEEDLGDIAFYPGRAAFYNLR</sequence>